<dbReference type="EC" id="2.7.8.7" evidence="1"/>
<dbReference type="EMBL" id="CP000572">
    <property type="protein sequence ID" value="ABN91245.1"/>
    <property type="molecule type" value="Genomic_DNA"/>
</dbReference>
<dbReference type="RefSeq" id="WP_004527465.1">
    <property type="nucleotide sequence ID" value="NC_009076.1"/>
</dbReference>
<dbReference type="SMR" id="A3NXL2"/>
<dbReference type="KEGG" id="bpl:BURPS1106A_2836"/>
<dbReference type="HOGENOM" id="CLU_089696_3_1_4"/>
<dbReference type="Proteomes" id="UP000006738">
    <property type="component" value="Chromosome I"/>
</dbReference>
<dbReference type="GO" id="GO:0005737">
    <property type="term" value="C:cytoplasm"/>
    <property type="evidence" value="ECO:0007669"/>
    <property type="project" value="UniProtKB-SubCell"/>
</dbReference>
<dbReference type="GO" id="GO:0008897">
    <property type="term" value="F:holo-[acyl-carrier-protein] synthase activity"/>
    <property type="evidence" value="ECO:0007669"/>
    <property type="project" value="UniProtKB-UniRule"/>
</dbReference>
<dbReference type="GO" id="GO:0000287">
    <property type="term" value="F:magnesium ion binding"/>
    <property type="evidence" value="ECO:0007669"/>
    <property type="project" value="UniProtKB-UniRule"/>
</dbReference>
<dbReference type="GO" id="GO:0006633">
    <property type="term" value="P:fatty acid biosynthetic process"/>
    <property type="evidence" value="ECO:0007669"/>
    <property type="project" value="UniProtKB-UniRule"/>
</dbReference>
<dbReference type="Gene3D" id="3.90.470.20">
    <property type="entry name" value="4'-phosphopantetheinyl transferase domain"/>
    <property type="match status" value="1"/>
</dbReference>
<dbReference type="HAMAP" id="MF_00101">
    <property type="entry name" value="AcpS"/>
    <property type="match status" value="1"/>
</dbReference>
<dbReference type="InterPro" id="IPR008278">
    <property type="entry name" value="4-PPantetheinyl_Trfase_dom"/>
</dbReference>
<dbReference type="InterPro" id="IPR037143">
    <property type="entry name" value="4-PPantetheinyl_Trfase_dom_sf"/>
</dbReference>
<dbReference type="InterPro" id="IPR002582">
    <property type="entry name" value="ACPS"/>
</dbReference>
<dbReference type="InterPro" id="IPR004568">
    <property type="entry name" value="Ppantetheine-prot_Trfase_dom"/>
</dbReference>
<dbReference type="NCBIfam" id="TIGR00516">
    <property type="entry name" value="acpS"/>
    <property type="match status" value="1"/>
</dbReference>
<dbReference type="NCBIfam" id="TIGR00556">
    <property type="entry name" value="pantethn_trn"/>
    <property type="match status" value="1"/>
</dbReference>
<dbReference type="Pfam" id="PF01648">
    <property type="entry name" value="ACPS"/>
    <property type="match status" value="1"/>
</dbReference>
<dbReference type="SUPFAM" id="SSF56214">
    <property type="entry name" value="4'-phosphopantetheinyl transferase"/>
    <property type="match status" value="1"/>
</dbReference>
<accession>A3NXL2</accession>
<reference key="1">
    <citation type="journal article" date="2010" name="Genome Biol. Evol.">
        <title>Continuing evolution of Burkholderia mallei through genome reduction and large-scale rearrangements.</title>
        <authorList>
            <person name="Losada L."/>
            <person name="Ronning C.M."/>
            <person name="DeShazer D."/>
            <person name="Woods D."/>
            <person name="Fedorova N."/>
            <person name="Kim H.S."/>
            <person name="Shabalina S.A."/>
            <person name="Pearson T.R."/>
            <person name="Brinkac L."/>
            <person name="Tan P."/>
            <person name="Nandi T."/>
            <person name="Crabtree J."/>
            <person name="Badger J."/>
            <person name="Beckstrom-Sternberg S."/>
            <person name="Saqib M."/>
            <person name="Schutzer S.E."/>
            <person name="Keim P."/>
            <person name="Nierman W.C."/>
        </authorList>
    </citation>
    <scope>NUCLEOTIDE SEQUENCE [LARGE SCALE GENOMIC DNA]</scope>
    <source>
        <strain>1106a</strain>
    </source>
</reference>
<sequence length="143" mass="15387">MAIYGIGTDLAQVSRIAAVLERTGGRFAEKVLGPDELRVFHARRARSEARGIAFLATRFSAKEAFSKAIGLGMHWPMTWRALQTLNRPSGEPYVVASGELAAWLDARGITARVTVSDERDYAVTFVVAEAPDHVAAARSGAAS</sequence>
<gene>
    <name evidence="1" type="primary">acpS</name>
    <name type="ordered locus">BURPS1106A_2836</name>
</gene>
<keyword id="KW-0963">Cytoplasm</keyword>
<keyword id="KW-0275">Fatty acid biosynthesis</keyword>
<keyword id="KW-0276">Fatty acid metabolism</keyword>
<keyword id="KW-0444">Lipid biosynthesis</keyword>
<keyword id="KW-0443">Lipid metabolism</keyword>
<keyword id="KW-0460">Magnesium</keyword>
<keyword id="KW-0479">Metal-binding</keyword>
<keyword id="KW-0808">Transferase</keyword>
<organism>
    <name type="scientific">Burkholderia pseudomallei (strain 1106a)</name>
    <dbReference type="NCBI Taxonomy" id="357348"/>
    <lineage>
        <taxon>Bacteria</taxon>
        <taxon>Pseudomonadati</taxon>
        <taxon>Pseudomonadota</taxon>
        <taxon>Betaproteobacteria</taxon>
        <taxon>Burkholderiales</taxon>
        <taxon>Burkholderiaceae</taxon>
        <taxon>Burkholderia</taxon>
        <taxon>pseudomallei group</taxon>
    </lineage>
</organism>
<comment type="function">
    <text evidence="1">Transfers the 4'-phosphopantetheine moiety from coenzyme A to a Ser of acyl-carrier-protein.</text>
</comment>
<comment type="catalytic activity">
    <reaction evidence="1">
        <text>apo-[ACP] + CoA = holo-[ACP] + adenosine 3',5'-bisphosphate + H(+)</text>
        <dbReference type="Rhea" id="RHEA:12068"/>
        <dbReference type="Rhea" id="RHEA-COMP:9685"/>
        <dbReference type="Rhea" id="RHEA-COMP:9690"/>
        <dbReference type="ChEBI" id="CHEBI:15378"/>
        <dbReference type="ChEBI" id="CHEBI:29999"/>
        <dbReference type="ChEBI" id="CHEBI:57287"/>
        <dbReference type="ChEBI" id="CHEBI:58343"/>
        <dbReference type="ChEBI" id="CHEBI:64479"/>
        <dbReference type="EC" id="2.7.8.7"/>
    </reaction>
</comment>
<comment type="cofactor">
    <cofactor evidence="1">
        <name>Mg(2+)</name>
        <dbReference type="ChEBI" id="CHEBI:18420"/>
    </cofactor>
</comment>
<comment type="subcellular location">
    <subcellularLocation>
        <location evidence="1">Cytoplasm</location>
    </subcellularLocation>
</comment>
<comment type="similarity">
    <text evidence="1">Belongs to the P-Pant transferase superfamily. AcpS family.</text>
</comment>
<name>ACPS_BURP0</name>
<protein>
    <recommendedName>
        <fullName evidence="1">Holo-[acyl-carrier-protein] synthase</fullName>
        <shortName evidence="1">Holo-ACP synthase</shortName>
        <ecNumber evidence="1">2.7.8.7</ecNumber>
    </recommendedName>
    <alternativeName>
        <fullName evidence="1">4'-phosphopantetheinyl transferase AcpS</fullName>
    </alternativeName>
</protein>
<feature type="chain" id="PRO_1000008400" description="Holo-[acyl-carrier-protein] synthase">
    <location>
        <begin position="1"/>
        <end position="143"/>
    </location>
</feature>
<feature type="binding site" evidence="1">
    <location>
        <position position="9"/>
    </location>
    <ligand>
        <name>Mg(2+)</name>
        <dbReference type="ChEBI" id="CHEBI:18420"/>
    </ligand>
</feature>
<feature type="binding site" evidence="1">
    <location>
        <position position="63"/>
    </location>
    <ligand>
        <name>Mg(2+)</name>
        <dbReference type="ChEBI" id="CHEBI:18420"/>
    </ligand>
</feature>
<proteinExistence type="inferred from homology"/>
<evidence type="ECO:0000255" key="1">
    <source>
        <dbReference type="HAMAP-Rule" id="MF_00101"/>
    </source>
</evidence>